<gene>
    <name evidence="1" type="primary">secA</name>
    <name type="ordered locus">RoseRS_0823</name>
</gene>
<dbReference type="EC" id="7.4.2.8" evidence="1"/>
<dbReference type="EMBL" id="CP000686">
    <property type="protein sequence ID" value="ABQ89237.1"/>
    <property type="molecule type" value="Genomic_DNA"/>
</dbReference>
<dbReference type="RefSeq" id="WP_011955591.1">
    <property type="nucleotide sequence ID" value="NC_009523.1"/>
</dbReference>
<dbReference type="SMR" id="A5URI4"/>
<dbReference type="STRING" id="357808.RoseRS_0823"/>
<dbReference type="KEGG" id="rrs:RoseRS_0823"/>
<dbReference type="eggNOG" id="COG0653">
    <property type="taxonomic scope" value="Bacteria"/>
</dbReference>
<dbReference type="HOGENOM" id="CLU_005314_3_0_0"/>
<dbReference type="OrthoDB" id="9805579at2"/>
<dbReference type="Proteomes" id="UP000006554">
    <property type="component" value="Chromosome"/>
</dbReference>
<dbReference type="GO" id="GO:0031522">
    <property type="term" value="C:cell envelope Sec protein transport complex"/>
    <property type="evidence" value="ECO:0007669"/>
    <property type="project" value="TreeGrafter"/>
</dbReference>
<dbReference type="GO" id="GO:0005829">
    <property type="term" value="C:cytosol"/>
    <property type="evidence" value="ECO:0007669"/>
    <property type="project" value="TreeGrafter"/>
</dbReference>
<dbReference type="GO" id="GO:0005886">
    <property type="term" value="C:plasma membrane"/>
    <property type="evidence" value="ECO:0007669"/>
    <property type="project" value="UniProtKB-SubCell"/>
</dbReference>
<dbReference type="GO" id="GO:0005524">
    <property type="term" value="F:ATP binding"/>
    <property type="evidence" value="ECO:0007669"/>
    <property type="project" value="UniProtKB-UniRule"/>
</dbReference>
<dbReference type="GO" id="GO:0046872">
    <property type="term" value="F:metal ion binding"/>
    <property type="evidence" value="ECO:0007669"/>
    <property type="project" value="UniProtKB-KW"/>
</dbReference>
<dbReference type="GO" id="GO:0008564">
    <property type="term" value="F:protein-exporting ATPase activity"/>
    <property type="evidence" value="ECO:0007669"/>
    <property type="project" value="UniProtKB-EC"/>
</dbReference>
<dbReference type="GO" id="GO:0065002">
    <property type="term" value="P:intracellular protein transmembrane transport"/>
    <property type="evidence" value="ECO:0007669"/>
    <property type="project" value="UniProtKB-UniRule"/>
</dbReference>
<dbReference type="GO" id="GO:0017038">
    <property type="term" value="P:protein import"/>
    <property type="evidence" value="ECO:0007669"/>
    <property type="project" value="InterPro"/>
</dbReference>
<dbReference type="GO" id="GO:0006605">
    <property type="term" value="P:protein targeting"/>
    <property type="evidence" value="ECO:0007669"/>
    <property type="project" value="UniProtKB-UniRule"/>
</dbReference>
<dbReference type="GO" id="GO:0043952">
    <property type="term" value="P:protein transport by the Sec complex"/>
    <property type="evidence" value="ECO:0007669"/>
    <property type="project" value="TreeGrafter"/>
</dbReference>
<dbReference type="CDD" id="cd17928">
    <property type="entry name" value="DEXDc_SecA"/>
    <property type="match status" value="1"/>
</dbReference>
<dbReference type="CDD" id="cd18803">
    <property type="entry name" value="SF2_C_secA"/>
    <property type="match status" value="1"/>
</dbReference>
<dbReference type="FunFam" id="3.40.50.300:FF:000113">
    <property type="entry name" value="Preprotein translocase subunit SecA"/>
    <property type="match status" value="1"/>
</dbReference>
<dbReference type="FunFam" id="3.90.1440.10:FF:000002">
    <property type="entry name" value="Protein translocase subunit SecA"/>
    <property type="match status" value="1"/>
</dbReference>
<dbReference type="Gene3D" id="1.10.3060.10">
    <property type="entry name" value="Helical scaffold and wing domains of SecA"/>
    <property type="match status" value="1"/>
</dbReference>
<dbReference type="Gene3D" id="3.40.50.300">
    <property type="entry name" value="P-loop containing nucleotide triphosphate hydrolases"/>
    <property type="match status" value="2"/>
</dbReference>
<dbReference type="Gene3D" id="3.90.1440.10">
    <property type="entry name" value="SecA, preprotein cross-linking domain"/>
    <property type="match status" value="1"/>
</dbReference>
<dbReference type="HAMAP" id="MF_01382">
    <property type="entry name" value="SecA"/>
    <property type="match status" value="1"/>
</dbReference>
<dbReference type="InterPro" id="IPR014001">
    <property type="entry name" value="Helicase_ATP-bd"/>
</dbReference>
<dbReference type="InterPro" id="IPR001650">
    <property type="entry name" value="Helicase_C-like"/>
</dbReference>
<dbReference type="InterPro" id="IPR027417">
    <property type="entry name" value="P-loop_NTPase"/>
</dbReference>
<dbReference type="InterPro" id="IPR004027">
    <property type="entry name" value="SEC_C_motif"/>
</dbReference>
<dbReference type="InterPro" id="IPR000185">
    <property type="entry name" value="SecA"/>
</dbReference>
<dbReference type="InterPro" id="IPR020937">
    <property type="entry name" value="SecA_CS"/>
</dbReference>
<dbReference type="InterPro" id="IPR011115">
    <property type="entry name" value="SecA_DEAD"/>
</dbReference>
<dbReference type="InterPro" id="IPR014018">
    <property type="entry name" value="SecA_motor_DEAD"/>
</dbReference>
<dbReference type="InterPro" id="IPR011130">
    <property type="entry name" value="SecA_preprotein_X-link_dom"/>
</dbReference>
<dbReference type="InterPro" id="IPR044722">
    <property type="entry name" value="SecA_SF2_C"/>
</dbReference>
<dbReference type="InterPro" id="IPR011116">
    <property type="entry name" value="SecA_Wing/Scaffold"/>
</dbReference>
<dbReference type="InterPro" id="IPR036266">
    <property type="entry name" value="SecA_Wing/Scaffold_sf"/>
</dbReference>
<dbReference type="InterPro" id="IPR036670">
    <property type="entry name" value="SecA_X-link_sf"/>
</dbReference>
<dbReference type="NCBIfam" id="NF009538">
    <property type="entry name" value="PRK12904.1"/>
    <property type="match status" value="1"/>
</dbReference>
<dbReference type="NCBIfam" id="TIGR00963">
    <property type="entry name" value="secA"/>
    <property type="match status" value="1"/>
</dbReference>
<dbReference type="PANTHER" id="PTHR30612:SF0">
    <property type="entry name" value="CHLOROPLAST PROTEIN-TRANSPORTING ATPASE"/>
    <property type="match status" value="1"/>
</dbReference>
<dbReference type="PANTHER" id="PTHR30612">
    <property type="entry name" value="SECA INNER MEMBRANE COMPONENT OF SEC PROTEIN SECRETION SYSTEM"/>
    <property type="match status" value="1"/>
</dbReference>
<dbReference type="Pfam" id="PF21090">
    <property type="entry name" value="P-loop_SecA"/>
    <property type="match status" value="1"/>
</dbReference>
<dbReference type="Pfam" id="PF02810">
    <property type="entry name" value="SEC-C"/>
    <property type="match status" value="1"/>
</dbReference>
<dbReference type="Pfam" id="PF07517">
    <property type="entry name" value="SecA_DEAD"/>
    <property type="match status" value="1"/>
</dbReference>
<dbReference type="Pfam" id="PF01043">
    <property type="entry name" value="SecA_PP_bind"/>
    <property type="match status" value="1"/>
</dbReference>
<dbReference type="Pfam" id="PF07516">
    <property type="entry name" value="SecA_SW"/>
    <property type="match status" value="1"/>
</dbReference>
<dbReference type="PRINTS" id="PR00906">
    <property type="entry name" value="SECA"/>
</dbReference>
<dbReference type="SMART" id="SM00957">
    <property type="entry name" value="SecA_DEAD"/>
    <property type="match status" value="1"/>
</dbReference>
<dbReference type="SMART" id="SM00958">
    <property type="entry name" value="SecA_PP_bind"/>
    <property type="match status" value="1"/>
</dbReference>
<dbReference type="SUPFAM" id="SSF81886">
    <property type="entry name" value="Helical scaffold and wing domains of SecA"/>
    <property type="match status" value="1"/>
</dbReference>
<dbReference type="SUPFAM" id="SSF52540">
    <property type="entry name" value="P-loop containing nucleoside triphosphate hydrolases"/>
    <property type="match status" value="2"/>
</dbReference>
<dbReference type="SUPFAM" id="SSF81767">
    <property type="entry name" value="Pre-protein crosslinking domain of SecA"/>
    <property type="match status" value="1"/>
</dbReference>
<dbReference type="PROSITE" id="PS01312">
    <property type="entry name" value="SECA"/>
    <property type="match status" value="1"/>
</dbReference>
<dbReference type="PROSITE" id="PS51196">
    <property type="entry name" value="SECA_MOTOR_DEAD"/>
    <property type="match status" value="1"/>
</dbReference>
<name>SECA_ROSS1</name>
<feature type="chain" id="PRO_0000320979" description="Protein translocase subunit SecA">
    <location>
        <begin position="1"/>
        <end position="1010"/>
    </location>
</feature>
<feature type="region of interest" description="Disordered" evidence="2">
    <location>
        <begin position="893"/>
        <end position="916"/>
    </location>
</feature>
<feature type="region of interest" description="Disordered" evidence="2">
    <location>
        <begin position="950"/>
        <end position="1010"/>
    </location>
</feature>
<feature type="compositionally biased region" description="Low complexity" evidence="2">
    <location>
        <begin position="893"/>
        <end position="904"/>
    </location>
</feature>
<feature type="compositionally biased region" description="Low complexity" evidence="2">
    <location>
        <begin position="950"/>
        <end position="981"/>
    </location>
</feature>
<feature type="binding site" evidence="1">
    <location>
        <position position="86"/>
    </location>
    <ligand>
        <name>ATP</name>
        <dbReference type="ChEBI" id="CHEBI:30616"/>
    </ligand>
</feature>
<feature type="binding site" evidence="1">
    <location>
        <begin position="104"/>
        <end position="108"/>
    </location>
    <ligand>
        <name>ATP</name>
        <dbReference type="ChEBI" id="CHEBI:30616"/>
    </ligand>
</feature>
<feature type="binding site" evidence="1">
    <location>
        <position position="535"/>
    </location>
    <ligand>
        <name>ATP</name>
        <dbReference type="ChEBI" id="CHEBI:30616"/>
    </ligand>
</feature>
<feature type="binding site" evidence="1">
    <location>
        <position position="920"/>
    </location>
    <ligand>
        <name>Zn(2+)</name>
        <dbReference type="ChEBI" id="CHEBI:29105"/>
    </ligand>
</feature>
<feature type="binding site" evidence="1">
    <location>
        <position position="922"/>
    </location>
    <ligand>
        <name>Zn(2+)</name>
        <dbReference type="ChEBI" id="CHEBI:29105"/>
    </ligand>
</feature>
<feature type="binding site" evidence="1">
    <location>
        <position position="931"/>
    </location>
    <ligand>
        <name>Zn(2+)</name>
        <dbReference type="ChEBI" id="CHEBI:29105"/>
    </ligand>
</feature>
<feature type="binding site" evidence="1">
    <location>
        <position position="932"/>
    </location>
    <ligand>
        <name>Zn(2+)</name>
        <dbReference type="ChEBI" id="CHEBI:29105"/>
    </ligand>
</feature>
<comment type="function">
    <text evidence="1">Part of the Sec protein translocase complex. Interacts with the SecYEG preprotein conducting channel. Has a central role in coupling the hydrolysis of ATP to the transfer of proteins into and across the cell membrane, serving as an ATP-driven molecular motor driving the stepwise translocation of polypeptide chains across the membrane.</text>
</comment>
<comment type="catalytic activity">
    <reaction evidence="1">
        <text>ATP + H2O + cellular proteinSide 1 = ADP + phosphate + cellular proteinSide 2.</text>
        <dbReference type="EC" id="7.4.2.8"/>
    </reaction>
</comment>
<comment type="cofactor">
    <cofactor evidence="1">
        <name>Zn(2+)</name>
        <dbReference type="ChEBI" id="CHEBI:29105"/>
    </cofactor>
    <text evidence="1">May bind 1 zinc ion per subunit.</text>
</comment>
<comment type="subunit">
    <text evidence="1">Monomer and homodimer. Part of the essential Sec protein translocation apparatus which comprises SecA, SecYEG and auxiliary proteins SecDF. Other proteins may also be involved.</text>
</comment>
<comment type="subcellular location">
    <subcellularLocation>
        <location evidence="1">Cell membrane</location>
        <topology evidence="1">Peripheral membrane protein</topology>
        <orientation evidence="1">Cytoplasmic side</orientation>
    </subcellularLocation>
    <subcellularLocation>
        <location evidence="1">Cytoplasm</location>
    </subcellularLocation>
    <text evidence="1">Distribution is 50-50.</text>
</comment>
<comment type="similarity">
    <text evidence="1">Belongs to the SecA family.</text>
</comment>
<accession>A5URI4</accession>
<sequence>MKAFFEKLLGFGPDRAIKQIEPIVRRINSLEPSVEALSNAELRAKTDEFKQRLADGETLDDLLPEAFAVVREAARRTIGQRHYDVQLIGGIVLHQGKIAEMKTGEGKTLVATLPLYLNALTGRGCHLVTVNDYLAKVGAGWMGPIYHLLGLSVATISHEYSAIYDPDYVDPKANPDDRRLVHWRPCSRREAYLADITYGTNNEFGFDYLRDNMAWDLAQLVQRELHYAIVDEVDNILIDEARTPLIISGPAQESGDEYRRFATLVRHLKPSPYTPDQIKKQMIEDPEGDFVIEPRSKSIQLTDQGVAKIERLLKIPEGESLYDPKYYRLTHYLDNALRAEFIYQRDRDYIVEHGEVIIVDEFTGRKMPGRRWSDGLHQAVEAKEGVKPRQENVTLATITFQNYFRMYQKLAGMTGTAYTEREEFAKIYNLEVVVIPTHRPMIRKDYDDQIYRSEKAKFEAVIREIEEMHAIGRPVLVGTTSVETSERLSEMLKRRGIKHEVLNAKYHEREARIVAQAGRKGAVTIATNMAGRGTDILLGGNPDGLIEEILAQRGIKIEQATPEQIRAAQEEARRITEAEGKEVRELGGLHIIGTERHESRRIDNQLRGRAGRQGDPGSSRFYLSLEDDLLRRFGPMDRVKGLMERLGVDDSLPIEAGLINRTIESAQTRVEGYNFDIRKHTVEFDDVMNKQRTVIYADRRRILEGENMRERVLDMIADEVHALVERYLPETKGRADDFEEWDIEGLVRAVRTIDPLLDETKLSPEQLEHLSRQEIEDAIMQAIEDDYQEREKAIGEENMRLVERRMMLSAIDRQWIDYLTGMEDLRQEIGLQAVAQRDPLIEYQRNAYAMFEELKANIQRDIVYQIIPVSFQYEQHLRQVEAEQQRRLLAAQQAGAADGNAKGARTVRHSVRLPGRNEPCPCGSGKKFKVCHWGREEELIALLQQRQTDQHAAVAADTPAQPAPQATATRPPTSQVPRGRAAPPPANPQPRSGKSPAQAPRGKGASARKK</sequence>
<proteinExistence type="inferred from homology"/>
<organism>
    <name type="scientific">Roseiflexus sp. (strain RS-1)</name>
    <dbReference type="NCBI Taxonomy" id="357808"/>
    <lineage>
        <taxon>Bacteria</taxon>
        <taxon>Bacillati</taxon>
        <taxon>Chloroflexota</taxon>
        <taxon>Chloroflexia</taxon>
        <taxon>Chloroflexales</taxon>
        <taxon>Roseiflexineae</taxon>
        <taxon>Roseiflexaceae</taxon>
        <taxon>Roseiflexus</taxon>
    </lineage>
</organism>
<reference key="1">
    <citation type="submission" date="2007-04" db="EMBL/GenBank/DDBJ databases">
        <title>Complete sequence of Roseiflexus sp. RS-1.</title>
        <authorList>
            <consortium name="US DOE Joint Genome Institute"/>
            <person name="Copeland A."/>
            <person name="Lucas S."/>
            <person name="Lapidus A."/>
            <person name="Barry K."/>
            <person name="Detter J.C."/>
            <person name="Glavina del Rio T."/>
            <person name="Hammon N."/>
            <person name="Israni S."/>
            <person name="Dalin E."/>
            <person name="Tice H."/>
            <person name="Pitluck S."/>
            <person name="Chertkov O."/>
            <person name="Brettin T."/>
            <person name="Bruce D."/>
            <person name="Han C."/>
            <person name="Schmutz J."/>
            <person name="Larimer F."/>
            <person name="Land M."/>
            <person name="Hauser L."/>
            <person name="Kyrpides N."/>
            <person name="Mikhailova N."/>
            <person name="Bryant D.A."/>
            <person name="Richardson P."/>
        </authorList>
    </citation>
    <scope>NUCLEOTIDE SEQUENCE [LARGE SCALE GENOMIC DNA]</scope>
    <source>
        <strain>RS-1</strain>
    </source>
</reference>
<evidence type="ECO:0000255" key="1">
    <source>
        <dbReference type="HAMAP-Rule" id="MF_01382"/>
    </source>
</evidence>
<evidence type="ECO:0000256" key="2">
    <source>
        <dbReference type="SAM" id="MobiDB-lite"/>
    </source>
</evidence>
<protein>
    <recommendedName>
        <fullName evidence="1">Protein translocase subunit SecA</fullName>
        <ecNumber evidence="1">7.4.2.8</ecNumber>
    </recommendedName>
</protein>
<keyword id="KW-0067">ATP-binding</keyword>
<keyword id="KW-1003">Cell membrane</keyword>
<keyword id="KW-0963">Cytoplasm</keyword>
<keyword id="KW-0472">Membrane</keyword>
<keyword id="KW-0479">Metal-binding</keyword>
<keyword id="KW-0547">Nucleotide-binding</keyword>
<keyword id="KW-0653">Protein transport</keyword>
<keyword id="KW-1278">Translocase</keyword>
<keyword id="KW-0811">Translocation</keyword>
<keyword id="KW-0813">Transport</keyword>
<keyword id="KW-0862">Zinc</keyword>